<dbReference type="EMBL" id="AB067632">
    <property type="protein sequence ID" value="BAB62524.1"/>
    <property type="molecule type" value="Genomic_DNA"/>
</dbReference>
<dbReference type="EMBL" id="AC022532">
    <property type="status" value="NOT_ANNOTATED_CDS"/>
    <property type="molecule type" value="Genomic_DNA"/>
</dbReference>
<dbReference type="EMBL" id="BC033585">
    <property type="protein sequence ID" value="AAH33585.1"/>
    <property type="molecule type" value="mRNA"/>
</dbReference>
<dbReference type="EMBL" id="BC104976">
    <property type="protein sequence ID" value="AAI04977.1"/>
    <property type="molecule type" value="mRNA"/>
</dbReference>
<dbReference type="EMBL" id="BC112025">
    <property type="protein sequence ID" value="AAI12026.1"/>
    <property type="molecule type" value="mRNA"/>
</dbReference>
<dbReference type="CCDS" id="CCDS7304.1"/>
<dbReference type="RefSeq" id="NP_060525.3">
    <property type="nucleotide sequence ID" value="NM_018055.4"/>
</dbReference>
<dbReference type="PDB" id="4N1D">
    <property type="method" value="X-ray"/>
    <property type="resolution" value="1.91 A"/>
    <property type="chains" value="A=257-313"/>
</dbReference>
<dbReference type="PDBsum" id="4N1D"/>
<dbReference type="SMR" id="Q96S42"/>
<dbReference type="BioGRID" id="110901">
    <property type="interactions" value="85"/>
</dbReference>
<dbReference type="FunCoup" id="Q96S42">
    <property type="interactions" value="573"/>
</dbReference>
<dbReference type="IntAct" id="Q96S42">
    <property type="interactions" value="4"/>
</dbReference>
<dbReference type="STRING" id="9606.ENSP00000287139"/>
<dbReference type="GlyCosmos" id="Q96S42">
    <property type="glycosylation" value="2 sites, No reported glycans"/>
</dbReference>
<dbReference type="GlyGen" id="Q96S42">
    <property type="glycosylation" value="3 sites"/>
</dbReference>
<dbReference type="BioMuta" id="NODAL"/>
<dbReference type="DMDM" id="166214958"/>
<dbReference type="MassIVE" id="Q96S42"/>
<dbReference type="PaxDb" id="9606-ENSP00000287139"/>
<dbReference type="PeptideAtlas" id="Q96S42"/>
<dbReference type="ProteomicsDB" id="78063"/>
<dbReference type="Antibodypedia" id="29029">
    <property type="antibodies" value="331 antibodies from 34 providers"/>
</dbReference>
<dbReference type="DNASU" id="4838"/>
<dbReference type="Ensembl" id="ENST00000287139.8">
    <property type="protein sequence ID" value="ENSP00000287139.3"/>
    <property type="gene ID" value="ENSG00000156574.10"/>
</dbReference>
<dbReference type="GeneID" id="4838"/>
<dbReference type="KEGG" id="hsa:4838"/>
<dbReference type="MANE-Select" id="ENST00000287139.8">
    <property type="protein sequence ID" value="ENSP00000287139.3"/>
    <property type="RefSeq nucleotide sequence ID" value="NM_018055.5"/>
    <property type="RefSeq protein sequence ID" value="NP_060525.3"/>
</dbReference>
<dbReference type="UCSC" id="uc001jrc.3">
    <property type="organism name" value="human"/>
</dbReference>
<dbReference type="AGR" id="HGNC:7865"/>
<dbReference type="CTD" id="4838"/>
<dbReference type="DisGeNET" id="4838"/>
<dbReference type="GeneCards" id="NODAL"/>
<dbReference type="GeneReviews" id="NODAL"/>
<dbReference type="HGNC" id="HGNC:7865">
    <property type="gene designation" value="NODAL"/>
</dbReference>
<dbReference type="HPA" id="ENSG00000156574">
    <property type="expression patterns" value="Tissue enhanced (skeletal muscle, testis)"/>
</dbReference>
<dbReference type="MalaCards" id="NODAL"/>
<dbReference type="MIM" id="270100">
    <property type="type" value="phenotype"/>
</dbReference>
<dbReference type="MIM" id="601265">
    <property type="type" value="gene"/>
</dbReference>
<dbReference type="neXtProt" id="NX_Q96S42"/>
<dbReference type="OpenTargets" id="ENSG00000156574"/>
<dbReference type="Orphanet" id="93925">
    <property type="disease" value="Alobar holoprosencephaly"/>
</dbReference>
<dbReference type="Orphanet" id="93924">
    <property type="disease" value="Lobar holoprosencephaly"/>
</dbReference>
<dbReference type="Orphanet" id="280200">
    <property type="disease" value="Microform holoprosencephaly"/>
</dbReference>
<dbReference type="Orphanet" id="93926">
    <property type="disease" value="Midline interhemispheric variant of holoprosencephaly"/>
</dbReference>
<dbReference type="Orphanet" id="220386">
    <property type="disease" value="Semilobar holoprosencephaly"/>
</dbReference>
<dbReference type="Orphanet" id="280195">
    <property type="disease" value="Septopreoptic holoprosencephaly"/>
</dbReference>
<dbReference type="Orphanet" id="157769">
    <property type="disease" value="Situs ambiguus"/>
</dbReference>
<dbReference type="Orphanet" id="101063">
    <property type="disease" value="Situs inversus totalis"/>
</dbReference>
<dbReference type="PharmGKB" id="PA31669"/>
<dbReference type="VEuPathDB" id="HostDB:ENSG00000156574"/>
<dbReference type="eggNOG" id="KOG3900">
    <property type="taxonomic scope" value="Eukaryota"/>
</dbReference>
<dbReference type="GeneTree" id="ENSGT00940000160223"/>
<dbReference type="HOGENOM" id="CLU_020515_1_0_1"/>
<dbReference type="InParanoid" id="Q96S42"/>
<dbReference type="OMA" id="AGECWQQ"/>
<dbReference type="OrthoDB" id="5949851at2759"/>
<dbReference type="PAN-GO" id="Q96S42">
    <property type="GO annotations" value="6 GO annotations based on evolutionary models"/>
</dbReference>
<dbReference type="PhylomeDB" id="Q96S42"/>
<dbReference type="TreeFam" id="TF316134"/>
<dbReference type="PathwayCommons" id="Q96S42"/>
<dbReference type="Reactome" id="R-HSA-1181150">
    <property type="pathway name" value="Signaling by NODAL"/>
</dbReference>
<dbReference type="Reactome" id="R-HSA-1433617">
    <property type="pathway name" value="Regulation of signaling by NODAL"/>
</dbReference>
<dbReference type="SignaLink" id="Q96S42"/>
<dbReference type="SIGNOR" id="Q96S42"/>
<dbReference type="BioGRID-ORCS" id="4838">
    <property type="hits" value="9 hits in 1144 CRISPR screens"/>
</dbReference>
<dbReference type="GeneWiki" id="NODAL"/>
<dbReference type="GenomeRNAi" id="4838"/>
<dbReference type="Pharos" id="Q96S42">
    <property type="development level" value="Tbio"/>
</dbReference>
<dbReference type="PRO" id="PR:Q96S42"/>
<dbReference type="Proteomes" id="UP000005640">
    <property type="component" value="Chromosome 10"/>
</dbReference>
<dbReference type="RNAct" id="Q96S42">
    <property type="molecule type" value="protein"/>
</dbReference>
<dbReference type="Bgee" id="ENSG00000156574">
    <property type="expression patterns" value="Expressed in male germ line stem cell (sensu Vertebrata) in testis and 113 other cell types or tissues"/>
</dbReference>
<dbReference type="ExpressionAtlas" id="Q96S42">
    <property type="expression patterns" value="baseline and differential"/>
</dbReference>
<dbReference type="GO" id="GO:0005615">
    <property type="term" value="C:extracellular space"/>
    <property type="evidence" value="ECO:0000314"/>
    <property type="project" value="BHF-UCL"/>
</dbReference>
<dbReference type="GO" id="GO:0005125">
    <property type="term" value="F:cytokine activity"/>
    <property type="evidence" value="ECO:0000314"/>
    <property type="project" value="BHF-UCL"/>
</dbReference>
<dbReference type="GO" id="GO:0008083">
    <property type="term" value="F:growth factor activity"/>
    <property type="evidence" value="ECO:0007669"/>
    <property type="project" value="UniProtKB-KW"/>
</dbReference>
<dbReference type="GO" id="GO:0016015">
    <property type="term" value="F:morphogen activity"/>
    <property type="evidence" value="ECO:0000303"/>
    <property type="project" value="BHF-UCL"/>
</dbReference>
<dbReference type="GO" id="GO:0070698">
    <property type="term" value="F:type I activin receptor binding"/>
    <property type="evidence" value="ECO:0000314"/>
    <property type="project" value="ARUK-UCL"/>
</dbReference>
<dbReference type="GO" id="GO:0097190">
    <property type="term" value="P:apoptotic signaling pathway"/>
    <property type="evidence" value="ECO:0000314"/>
    <property type="project" value="BHF-UCL"/>
</dbReference>
<dbReference type="GO" id="GO:0048327">
    <property type="term" value="P:axial mesodermal cell fate specification"/>
    <property type="evidence" value="ECO:0007669"/>
    <property type="project" value="Ensembl"/>
</dbReference>
<dbReference type="GO" id="GO:0007420">
    <property type="term" value="P:brain development"/>
    <property type="evidence" value="ECO:0007669"/>
    <property type="project" value="Ensembl"/>
</dbReference>
<dbReference type="GO" id="GO:0042074">
    <property type="term" value="P:cell migration involved in gastrulation"/>
    <property type="evidence" value="ECO:0007669"/>
    <property type="project" value="Ensembl"/>
</dbReference>
<dbReference type="GO" id="GO:0008283">
    <property type="term" value="P:cell population proliferation"/>
    <property type="evidence" value="ECO:0007669"/>
    <property type="project" value="Ensembl"/>
</dbReference>
<dbReference type="GO" id="GO:0003140">
    <property type="term" value="P:determination of left/right asymmetry in lateral mesoderm"/>
    <property type="evidence" value="ECO:0000250"/>
    <property type="project" value="BHF-UCL"/>
</dbReference>
<dbReference type="GO" id="GO:0048546">
    <property type="term" value="P:digestive tract morphogenesis"/>
    <property type="evidence" value="ECO:0007669"/>
    <property type="project" value="Ensembl"/>
</dbReference>
<dbReference type="GO" id="GO:0048701">
    <property type="term" value="P:embryonic cranial skeleton morphogenesis"/>
    <property type="evidence" value="ECO:0007669"/>
    <property type="project" value="Ensembl"/>
</dbReference>
<dbReference type="GO" id="GO:0009880">
    <property type="term" value="P:embryonic pattern specification"/>
    <property type="evidence" value="ECO:0007669"/>
    <property type="project" value="Ensembl"/>
</dbReference>
<dbReference type="GO" id="GO:0001892">
    <property type="term" value="P:embryonic placenta development"/>
    <property type="evidence" value="ECO:0007669"/>
    <property type="project" value="Ensembl"/>
</dbReference>
<dbReference type="GO" id="GO:0060136">
    <property type="term" value="P:embryonic process involved in female pregnancy"/>
    <property type="evidence" value="ECO:0007669"/>
    <property type="project" value="Ensembl"/>
</dbReference>
<dbReference type="GO" id="GO:0035987">
    <property type="term" value="P:endodermal cell differentiation"/>
    <property type="evidence" value="ECO:0000315"/>
    <property type="project" value="BHF-UCL"/>
</dbReference>
<dbReference type="GO" id="GO:0060802">
    <property type="term" value="P:epiblast cell-extraembryonic ectoderm cell signaling"/>
    <property type="evidence" value="ECO:0007669"/>
    <property type="project" value="Ensembl"/>
</dbReference>
<dbReference type="GO" id="GO:0033505">
    <property type="term" value="P:floor plate morphogenesis"/>
    <property type="evidence" value="ECO:0007669"/>
    <property type="project" value="Ensembl"/>
</dbReference>
<dbReference type="GO" id="GO:0048859">
    <property type="term" value="P:formation of anatomical boundary"/>
    <property type="evidence" value="ECO:0007669"/>
    <property type="project" value="Ensembl"/>
</dbReference>
<dbReference type="GO" id="GO:0007281">
    <property type="term" value="P:germ cell development"/>
    <property type="evidence" value="ECO:0007669"/>
    <property type="project" value="Ensembl"/>
</dbReference>
<dbReference type="GO" id="GO:0001947">
    <property type="term" value="P:heart looping"/>
    <property type="evidence" value="ECO:0007669"/>
    <property type="project" value="Ensembl"/>
</dbReference>
<dbReference type="GO" id="GO:0002085">
    <property type="term" value="P:inhibition of neuroepithelial cell differentiation"/>
    <property type="evidence" value="ECO:0007669"/>
    <property type="project" value="Ensembl"/>
</dbReference>
<dbReference type="GO" id="GO:0060460">
    <property type="term" value="P:left lung morphogenesis"/>
    <property type="evidence" value="ECO:0007669"/>
    <property type="project" value="Ensembl"/>
</dbReference>
<dbReference type="GO" id="GO:0001889">
    <property type="term" value="P:liver development"/>
    <property type="evidence" value="ECO:0007669"/>
    <property type="project" value="Ensembl"/>
</dbReference>
<dbReference type="GO" id="GO:0001893">
    <property type="term" value="P:maternal placenta development"/>
    <property type="evidence" value="ECO:0007669"/>
    <property type="project" value="Ensembl"/>
</dbReference>
<dbReference type="GO" id="GO:0060137">
    <property type="term" value="P:maternal process involved in parturition"/>
    <property type="evidence" value="ECO:0007669"/>
    <property type="project" value="Ensembl"/>
</dbReference>
<dbReference type="GO" id="GO:0048382">
    <property type="term" value="P:mesendoderm development"/>
    <property type="evidence" value="ECO:0000315"/>
    <property type="project" value="BHF-UCL"/>
</dbReference>
<dbReference type="GO" id="GO:0060766">
    <property type="term" value="P:negative regulation of androgen receptor signaling pathway"/>
    <property type="evidence" value="ECO:0000314"/>
    <property type="project" value="BHF-UCL"/>
</dbReference>
<dbReference type="GO" id="GO:0010721">
    <property type="term" value="P:negative regulation of cell development"/>
    <property type="evidence" value="ECO:0007669"/>
    <property type="project" value="Ensembl"/>
</dbReference>
<dbReference type="GO" id="GO:1901383">
    <property type="term" value="P:negative regulation of chorionic trophoblast cell proliferation"/>
    <property type="evidence" value="ECO:0000314"/>
    <property type="project" value="BHF-UCL"/>
</dbReference>
<dbReference type="GO" id="GO:0000122">
    <property type="term" value="P:negative regulation of transcription by RNA polymerase II"/>
    <property type="evidence" value="ECO:0007669"/>
    <property type="project" value="Ensembl"/>
</dbReference>
<dbReference type="GO" id="GO:1901164">
    <property type="term" value="P:negative regulation of trophoblast cell migration"/>
    <property type="evidence" value="ECO:0000314"/>
    <property type="project" value="BHF-UCL"/>
</dbReference>
<dbReference type="GO" id="GO:0001842">
    <property type="term" value="P:neural fold formation"/>
    <property type="evidence" value="ECO:0007669"/>
    <property type="project" value="Ensembl"/>
</dbReference>
<dbReference type="GO" id="GO:0038092">
    <property type="term" value="P:nodal signaling pathway"/>
    <property type="evidence" value="ECO:0000314"/>
    <property type="project" value="BHF-UCL"/>
</dbReference>
<dbReference type="GO" id="GO:0001890">
    <property type="term" value="P:placenta development"/>
    <property type="evidence" value="ECO:0000315"/>
    <property type="project" value="BHF-UCL"/>
</dbReference>
<dbReference type="GO" id="GO:0010085">
    <property type="term" value="P:polarity specification of proximal/distal axis"/>
    <property type="evidence" value="ECO:0007669"/>
    <property type="project" value="Ensembl"/>
</dbReference>
<dbReference type="GO" id="GO:0045766">
    <property type="term" value="P:positive regulation of angiogenesis"/>
    <property type="evidence" value="ECO:0000315"/>
    <property type="project" value="BHF-UCL"/>
</dbReference>
<dbReference type="GO" id="GO:0022409">
    <property type="term" value="P:positive regulation of cell-cell adhesion"/>
    <property type="evidence" value="ECO:0000315"/>
    <property type="project" value="BHF-UCL"/>
</dbReference>
<dbReference type="GO" id="GO:0050679">
    <property type="term" value="P:positive regulation of epithelial cell proliferation"/>
    <property type="evidence" value="ECO:0000314"/>
    <property type="project" value="BHF-UCL"/>
</dbReference>
<dbReference type="GO" id="GO:0070374">
    <property type="term" value="P:positive regulation of ERK1 and ERK2 cascade"/>
    <property type="evidence" value="ECO:0000315"/>
    <property type="project" value="BHF-UCL"/>
</dbReference>
<dbReference type="GO" id="GO:0060391">
    <property type="term" value="P:positive regulation of SMAD protein signal transduction"/>
    <property type="evidence" value="ECO:0000315"/>
    <property type="project" value="BHF-UCL"/>
</dbReference>
<dbReference type="GO" id="GO:0045944">
    <property type="term" value="P:positive regulation of transcription by RNA polymerase II"/>
    <property type="evidence" value="ECO:0000315"/>
    <property type="project" value="BHF-UCL"/>
</dbReference>
<dbReference type="GO" id="GO:0010575">
    <property type="term" value="P:positive regulation of vascular endothelial growth factor production"/>
    <property type="evidence" value="ECO:0000315"/>
    <property type="project" value="BHF-UCL"/>
</dbReference>
<dbReference type="GO" id="GO:0090009">
    <property type="term" value="P:primitive streak formation"/>
    <property type="evidence" value="ECO:0007669"/>
    <property type="project" value="Ensembl"/>
</dbReference>
<dbReference type="GO" id="GO:0010470">
    <property type="term" value="P:regulation of gastrulation"/>
    <property type="evidence" value="ECO:0007669"/>
    <property type="project" value="Ensembl"/>
</dbReference>
<dbReference type="GO" id="GO:2000036">
    <property type="term" value="P:regulation of stem cell population maintenance"/>
    <property type="evidence" value="ECO:0000304"/>
    <property type="project" value="BHF-UCL"/>
</dbReference>
<dbReference type="GO" id="GO:0035019">
    <property type="term" value="P:somatic stem cell population maintenance"/>
    <property type="evidence" value="ECO:0007669"/>
    <property type="project" value="Ensembl"/>
</dbReference>
<dbReference type="GO" id="GO:0007179">
    <property type="term" value="P:transforming growth factor beta receptor signaling pathway"/>
    <property type="evidence" value="ECO:0007669"/>
    <property type="project" value="Ensembl"/>
</dbReference>
<dbReference type="GO" id="GO:0001831">
    <property type="term" value="P:trophectodermal cellular morphogenesis"/>
    <property type="evidence" value="ECO:0007669"/>
    <property type="project" value="Ensembl"/>
</dbReference>
<dbReference type="GO" id="GO:0001944">
    <property type="term" value="P:vasculature development"/>
    <property type="evidence" value="ECO:0007669"/>
    <property type="project" value="Ensembl"/>
</dbReference>
<dbReference type="CDD" id="cd13759">
    <property type="entry name" value="TGF_beta_NODAL"/>
    <property type="match status" value="1"/>
</dbReference>
<dbReference type="FunFam" id="2.10.90.10:FF:000026">
    <property type="entry name" value="Nodal homolog 3-A"/>
    <property type="match status" value="1"/>
</dbReference>
<dbReference type="Gene3D" id="2.10.90.10">
    <property type="entry name" value="Cystine-knot cytokines"/>
    <property type="match status" value="1"/>
</dbReference>
<dbReference type="IDEAL" id="IID00577"/>
<dbReference type="InterPro" id="IPR029034">
    <property type="entry name" value="Cystine-knot_cytokine"/>
</dbReference>
<dbReference type="InterPro" id="IPR001839">
    <property type="entry name" value="TGF-b_C"/>
</dbReference>
<dbReference type="InterPro" id="IPR015615">
    <property type="entry name" value="TGF-beta-rel"/>
</dbReference>
<dbReference type="InterPro" id="IPR017948">
    <property type="entry name" value="TGFb_CS"/>
</dbReference>
<dbReference type="PANTHER" id="PTHR11848:SF159">
    <property type="entry name" value="NODAL HOMOLOG"/>
    <property type="match status" value="1"/>
</dbReference>
<dbReference type="PANTHER" id="PTHR11848">
    <property type="entry name" value="TGF-BETA FAMILY"/>
    <property type="match status" value="1"/>
</dbReference>
<dbReference type="Pfam" id="PF00019">
    <property type="entry name" value="TGF_beta"/>
    <property type="match status" value="1"/>
</dbReference>
<dbReference type="SMART" id="SM00204">
    <property type="entry name" value="TGFB"/>
    <property type="match status" value="1"/>
</dbReference>
<dbReference type="SUPFAM" id="SSF57501">
    <property type="entry name" value="Cystine-knot cytokines"/>
    <property type="match status" value="1"/>
</dbReference>
<dbReference type="PROSITE" id="PS00250">
    <property type="entry name" value="TGF_BETA_1"/>
    <property type="match status" value="1"/>
</dbReference>
<dbReference type="PROSITE" id="PS51362">
    <property type="entry name" value="TGF_BETA_2"/>
    <property type="match status" value="1"/>
</dbReference>
<comment type="function">
    <text evidence="1">Essential for mesoderm formation and axial patterning during embryonic development.</text>
</comment>
<comment type="subunit">
    <text evidence="1">Homodimer; disulfide-linked.</text>
</comment>
<comment type="interaction">
    <interactant intactId="EBI-12386190">
        <id>Q96S42</id>
    </interactant>
    <interactant intactId="EBI-948001">
        <id>Q15323</id>
        <label>KRT31</label>
    </interactant>
    <organismsDiffer>false</organismsDiffer>
    <experiments>3</experiments>
</comment>
<comment type="interaction">
    <interactant intactId="EBI-12386190">
        <id>Q96S42</id>
    </interactant>
    <interactant intactId="EBI-22311199">
        <id>Q3LI67</id>
        <label>KRTAP6-3</label>
    </interactant>
    <organismsDiffer>false</organismsDiffer>
    <experiments>3</experiments>
</comment>
<comment type="subcellular location">
    <subcellularLocation>
        <location evidence="1">Secreted</location>
    </subcellularLocation>
</comment>
<comment type="disease" evidence="4 5">
    <disease id="DI-01030">
        <name>Heterotaxy, visceral, 5, autosomal</name>
        <acronym>HTX5</acronym>
        <description>An autosomal dominant form of visceral heterotaxy, a complex disorder due to disruption of the normal left-right asymmetry of the thoracoabdominal organs. Visceral heterotaxy or situs ambiguus results in randomization of the placement of visceral organs, including the heart, lungs, liver, spleen, and stomach. The organs are oriented randomly with respect to the left-right axis and with respect to one another. It can be associated with a variety of congenital defects including cardiac malformations. HTX5 clinical features include situs inversus viscerum or situs ambiguus, congenital heart defect, transposition of the great vessels ventricular septal defect, atrial septal defect, truncus communis, and dextrocardia.</description>
        <dbReference type="MIM" id="270100"/>
    </disease>
    <text>The disease is caused by variants affecting the gene represented in this entry.</text>
</comment>
<comment type="similarity">
    <text evidence="7">Belongs to the TGF-beta family.</text>
</comment>
<gene>
    <name type="primary">NODAL</name>
</gene>
<reference key="1">
    <citation type="submission" date="2001-07" db="EMBL/GenBank/DDBJ databases">
        <title>Human Nodal-related gene.</title>
        <authorList>
            <person name="Tate Genshu T."/>
        </authorList>
    </citation>
    <scope>NUCLEOTIDE SEQUENCE [GENOMIC DNA]</scope>
    <scope>VARIANT ARG-165</scope>
</reference>
<reference key="2">
    <citation type="journal article" date="2004" name="Nature">
        <title>The DNA sequence and comparative analysis of human chromosome 10.</title>
        <authorList>
            <person name="Deloukas P."/>
            <person name="Earthrowl M.E."/>
            <person name="Grafham D.V."/>
            <person name="Rubenfield M."/>
            <person name="French L."/>
            <person name="Steward C.A."/>
            <person name="Sims S.K."/>
            <person name="Jones M.C."/>
            <person name="Searle S."/>
            <person name="Scott C."/>
            <person name="Howe K."/>
            <person name="Hunt S.E."/>
            <person name="Andrews T.D."/>
            <person name="Gilbert J.G.R."/>
            <person name="Swarbreck D."/>
            <person name="Ashurst J.L."/>
            <person name="Taylor A."/>
            <person name="Battles J."/>
            <person name="Bird C.P."/>
            <person name="Ainscough R."/>
            <person name="Almeida J.P."/>
            <person name="Ashwell R.I.S."/>
            <person name="Ambrose K.D."/>
            <person name="Babbage A.K."/>
            <person name="Bagguley C.L."/>
            <person name="Bailey J."/>
            <person name="Banerjee R."/>
            <person name="Bates K."/>
            <person name="Beasley H."/>
            <person name="Bray-Allen S."/>
            <person name="Brown A.J."/>
            <person name="Brown J.Y."/>
            <person name="Burford D.C."/>
            <person name="Burrill W."/>
            <person name="Burton J."/>
            <person name="Cahill P."/>
            <person name="Camire D."/>
            <person name="Carter N.P."/>
            <person name="Chapman J.C."/>
            <person name="Clark S.Y."/>
            <person name="Clarke G."/>
            <person name="Clee C.M."/>
            <person name="Clegg S."/>
            <person name="Corby N."/>
            <person name="Coulson A."/>
            <person name="Dhami P."/>
            <person name="Dutta I."/>
            <person name="Dunn M."/>
            <person name="Faulkner L."/>
            <person name="Frankish A."/>
            <person name="Frankland J.A."/>
            <person name="Garner P."/>
            <person name="Garnett J."/>
            <person name="Gribble S."/>
            <person name="Griffiths C."/>
            <person name="Grocock R."/>
            <person name="Gustafson E."/>
            <person name="Hammond S."/>
            <person name="Harley J.L."/>
            <person name="Hart E."/>
            <person name="Heath P.D."/>
            <person name="Ho T.P."/>
            <person name="Hopkins B."/>
            <person name="Horne J."/>
            <person name="Howden P.J."/>
            <person name="Huckle E."/>
            <person name="Hynds C."/>
            <person name="Johnson C."/>
            <person name="Johnson D."/>
            <person name="Kana A."/>
            <person name="Kay M."/>
            <person name="Kimberley A.M."/>
            <person name="Kershaw J.K."/>
            <person name="Kokkinaki M."/>
            <person name="Laird G.K."/>
            <person name="Lawlor S."/>
            <person name="Lee H.M."/>
            <person name="Leongamornlert D.A."/>
            <person name="Laird G."/>
            <person name="Lloyd C."/>
            <person name="Lloyd D.M."/>
            <person name="Loveland J."/>
            <person name="Lovell J."/>
            <person name="McLaren S."/>
            <person name="McLay K.E."/>
            <person name="McMurray A."/>
            <person name="Mashreghi-Mohammadi M."/>
            <person name="Matthews L."/>
            <person name="Milne S."/>
            <person name="Nickerson T."/>
            <person name="Nguyen M."/>
            <person name="Overton-Larty E."/>
            <person name="Palmer S.A."/>
            <person name="Pearce A.V."/>
            <person name="Peck A.I."/>
            <person name="Pelan S."/>
            <person name="Phillimore B."/>
            <person name="Porter K."/>
            <person name="Rice C.M."/>
            <person name="Rogosin A."/>
            <person name="Ross M.T."/>
            <person name="Sarafidou T."/>
            <person name="Sehra H.K."/>
            <person name="Shownkeen R."/>
            <person name="Skuce C.D."/>
            <person name="Smith M."/>
            <person name="Standring L."/>
            <person name="Sycamore N."/>
            <person name="Tester J."/>
            <person name="Thorpe A."/>
            <person name="Torcasso W."/>
            <person name="Tracey A."/>
            <person name="Tromans A."/>
            <person name="Tsolas J."/>
            <person name="Wall M."/>
            <person name="Walsh J."/>
            <person name="Wang H."/>
            <person name="Weinstock K."/>
            <person name="West A.P."/>
            <person name="Willey D.L."/>
            <person name="Whitehead S.L."/>
            <person name="Wilming L."/>
            <person name="Wray P.W."/>
            <person name="Young L."/>
            <person name="Chen Y."/>
            <person name="Lovering R.C."/>
            <person name="Moschonas N.K."/>
            <person name="Siebert R."/>
            <person name="Fechtel K."/>
            <person name="Bentley D."/>
            <person name="Durbin R.M."/>
            <person name="Hubbard T."/>
            <person name="Doucette-Stamm L."/>
            <person name="Beck S."/>
            <person name="Smith D.R."/>
            <person name="Rogers J."/>
        </authorList>
    </citation>
    <scope>NUCLEOTIDE SEQUENCE [LARGE SCALE GENOMIC DNA]</scope>
</reference>
<reference key="3">
    <citation type="journal article" date="2004" name="Genome Res.">
        <title>The status, quality, and expansion of the NIH full-length cDNA project: the Mammalian Gene Collection (MGC).</title>
        <authorList>
            <consortium name="The MGC Project Team"/>
        </authorList>
    </citation>
    <scope>NUCLEOTIDE SEQUENCE [LARGE SCALE MRNA]</scope>
    <source>
        <tissue>Brain cortex</tissue>
        <tissue>Fetal brain</tissue>
    </source>
</reference>
<reference key="4">
    <citation type="journal article" date="1997" name="Nat. Genet.">
        <title>X-linked situs abnormalities result from mutations in ZIC3.</title>
        <authorList>
            <person name="Gebbia M."/>
            <person name="Ferrero G.B."/>
            <person name="Pilia G."/>
            <person name="Bassi M.T."/>
            <person name="Aylsworth A.S."/>
            <person name="Penman-Splitt M."/>
            <person name="Bird L.M."/>
            <person name="Bamforth J.S."/>
            <person name="Burn J."/>
            <person name="Schlessiner D."/>
            <person name="Nelson D.L."/>
            <person name="Casey B."/>
        </authorList>
    </citation>
    <scope>VARIANT HTX5 GLN-183</scope>
</reference>
<reference key="5">
    <citation type="journal article" date="2006" name="Science">
        <title>The consensus coding sequences of human breast and colorectal cancers.</title>
        <authorList>
            <person name="Sjoeblom T."/>
            <person name="Jones S."/>
            <person name="Wood L.D."/>
            <person name="Parsons D.W."/>
            <person name="Lin J."/>
            <person name="Barber T.D."/>
            <person name="Mandelker D."/>
            <person name="Leary R.J."/>
            <person name="Ptak J."/>
            <person name="Silliman N."/>
            <person name="Szabo S."/>
            <person name="Buckhaults P."/>
            <person name="Farrell C."/>
            <person name="Meeh P."/>
            <person name="Markowitz S.D."/>
            <person name="Willis J."/>
            <person name="Dawson D."/>
            <person name="Willson J.K.V."/>
            <person name="Gazdar A.F."/>
            <person name="Hartigan J."/>
            <person name="Wu L."/>
            <person name="Liu C."/>
            <person name="Parmigiani G."/>
            <person name="Park B.H."/>
            <person name="Bachman K.E."/>
            <person name="Papadopoulos N."/>
            <person name="Vogelstein B."/>
            <person name="Kinzler K.W."/>
            <person name="Velculescu V.E."/>
        </authorList>
    </citation>
    <scope>VARIANT [LARGE SCALE ANALYSIS] LYS-279</scope>
</reference>
<reference key="6">
    <citation type="journal article" date="2009" name="Hum. Mol. Genet.">
        <title>Identification and functional characterization of NODAL rare variants in heterotaxy and isolated cardiovascular malformations.</title>
        <authorList>
            <person name="Mohapatra B."/>
            <person name="Casey B."/>
            <person name="Li H."/>
            <person name="Ho-Dawson T."/>
            <person name="Smith L."/>
            <person name="Fernbach S.D."/>
            <person name="Molinari L."/>
            <person name="Niesh S.R."/>
            <person name="Jefferies J.L."/>
            <person name="Craigen W.J."/>
            <person name="Towbin J.A."/>
            <person name="Belmont J.W."/>
            <person name="Ware S.M."/>
        </authorList>
    </citation>
    <scope>VARIANTS HTX5 LYS-203; ARG-260; CYS-275 AND PHE-284</scope>
    <scope>CHARACTERIZATION OF VARIANTS HTX5 LYS-203; ARG-260; CYS-275 AND PHE-284</scope>
</reference>
<proteinExistence type="evidence at protein level"/>
<feature type="signal peptide" evidence="2">
    <location>
        <begin position="1"/>
        <end position="26"/>
    </location>
</feature>
<feature type="propeptide" id="PRO_0000033998" evidence="2">
    <location>
        <begin position="27"/>
        <end position="237"/>
    </location>
</feature>
<feature type="chain" id="PRO_0000033999" description="Nodal homolog">
    <location>
        <begin position="238"/>
        <end position="347"/>
    </location>
</feature>
<feature type="glycosylation site" description="N-linked (GlcNAc...) asparagine" evidence="2">
    <location>
        <position position="72"/>
    </location>
</feature>
<feature type="glycosylation site" description="N-linked (GlcNAc...) asparagine" evidence="2">
    <location>
        <position position="199"/>
    </location>
</feature>
<feature type="disulfide bond" evidence="1">
    <location>
        <begin position="247"/>
        <end position="313"/>
    </location>
</feature>
<feature type="disulfide bond" evidence="1">
    <location>
        <begin position="276"/>
        <end position="344"/>
    </location>
</feature>
<feature type="disulfide bond" evidence="1">
    <location>
        <begin position="280"/>
        <end position="346"/>
    </location>
</feature>
<feature type="disulfide bond" description="Interchain" evidence="1">
    <location>
        <position position="312"/>
    </location>
</feature>
<feature type="sequence variant" id="VAR_038193" description="In dbSNP:rs1904589." evidence="6">
    <original>H</original>
    <variation>R</variation>
    <location>
        <position position="165"/>
    </location>
</feature>
<feature type="sequence variant" id="VAR_015111" description="In HTX5; dbSNP:rs104894169." evidence="5">
    <original>R</original>
    <variation>Q</variation>
    <location>
        <position position="183"/>
    </location>
</feature>
<feature type="sequence variant" id="VAR_038194" description="In HTX5; likely benign; decrease in signal transduction; dbSNP:rs10999334." evidence="4">
    <original>E</original>
    <variation>K</variation>
    <location>
        <position position="203"/>
    </location>
</feature>
<feature type="sequence variant" id="VAR_062281" description="In HTX5; decrease in signal transduction; dbSNP:rs121909283." evidence="4">
    <original>G</original>
    <variation>R</variation>
    <location>
        <position position="260"/>
    </location>
</feature>
<feature type="sequence variant" id="VAR_062282" description="In HTX5; decrease in signal transduction; dbSNP:rs781366461." evidence="4">
    <original>R</original>
    <variation>C</variation>
    <location>
        <position position="275"/>
    </location>
</feature>
<feature type="sequence variant" id="VAR_036202" description="In a colorectal cancer sample; somatic mutation; dbSNP:rs755116310." evidence="3">
    <original>E</original>
    <variation>K</variation>
    <location>
        <position position="279"/>
    </location>
</feature>
<feature type="sequence variant" id="VAR_062283" description="In HTX5; decrease in signal transduction; dbSNP:rs1310479365." evidence="4">
    <original>V</original>
    <variation>F</variation>
    <location>
        <position position="284"/>
    </location>
</feature>
<feature type="turn" evidence="8">
    <location>
        <begin position="257"/>
        <end position="260"/>
    </location>
</feature>
<feature type="turn" evidence="8">
    <location>
        <begin position="262"/>
        <end position="264"/>
    </location>
</feature>
<feature type="strand" evidence="8">
    <location>
        <begin position="265"/>
        <end position="267"/>
    </location>
</feature>
<feature type="strand" evidence="8">
    <location>
        <begin position="269"/>
        <end position="272"/>
    </location>
</feature>
<feature type="strand" evidence="8">
    <location>
        <begin position="275"/>
        <end position="279"/>
    </location>
</feature>
<feature type="helix" evidence="8">
    <location>
        <begin position="286"/>
        <end position="288"/>
    </location>
</feature>
<feature type="helix" evidence="8">
    <location>
        <begin position="292"/>
        <end position="303"/>
    </location>
</feature>
<feature type="turn" evidence="8">
    <location>
        <begin position="305"/>
        <end position="307"/>
    </location>
</feature>
<keyword id="KW-0002">3D-structure</keyword>
<keyword id="KW-0165">Cleavage on pair of basic residues</keyword>
<keyword id="KW-0202">Cytokine</keyword>
<keyword id="KW-0217">Developmental protein</keyword>
<keyword id="KW-0225">Disease variant</keyword>
<keyword id="KW-1015">Disulfide bond</keyword>
<keyword id="KW-0325">Glycoprotein</keyword>
<keyword id="KW-0339">Growth factor</keyword>
<keyword id="KW-1056">Heterotaxy</keyword>
<keyword id="KW-1267">Proteomics identification</keyword>
<keyword id="KW-1185">Reference proteome</keyword>
<keyword id="KW-0964">Secreted</keyword>
<keyword id="KW-0732">Signal</keyword>
<sequence>MHAHCLPFLLHAWWALLQAGAATVATALLRTRGQPSSPSPLAYMLSLYRDPLPRADIIRSLQAEDVAVDGQNWTFAFDFSFLSQQEDLAWAELRLQLSSPVDLPTEGSLAIEIFHQPKPDTEQASDSCLERFQMDLFTVTLSQVTFSLGSMVLEVTRPLSKWLKHPGALEKQMSRVAGECWPRPPTPPATNVLLMLYSNLSQEQRQLGGSTLLWEAESSWRAQEGQLSWEWGKRHRRHHLPDRSQLCRKVKFQVDFNLIGWGSWIIYPKQYNAYRCEGECPNPVGEEFHPTNHAYIQSLLKRYQPHRVPSTCCAPVKTKPLSMLYVDNGRVLLDHHKDMIVEECGCL</sequence>
<evidence type="ECO:0000250" key="1"/>
<evidence type="ECO:0000255" key="2"/>
<evidence type="ECO:0000269" key="3">
    <source>
    </source>
</evidence>
<evidence type="ECO:0000269" key="4">
    <source>
    </source>
</evidence>
<evidence type="ECO:0000269" key="5">
    <source>
    </source>
</evidence>
<evidence type="ECO:0000269" key="6">
    <source ref="1"/>
</evidence>
<evidence type="ECO:0000305" key="7"/>
<evidence type="ECO:0007829" key="8">
    <source>
        <dbReference type="PDB" id="4N1D"/>
    </source>
</evidence>
<accession>Q96S42</accession>
<accession>Q2M3A5</accession>
<accession>Q8N4V3</accession>
<protein>
    <recommendedName>
        <fullName>Nodal homolog</fullName>
    </recommendedName>
</protein>
<name>NODAL_HUMAN</name>
<organism>
    <name type="scientific">Homo sapiens</name>
    <name type="common">Human</name>
    <dbReference type="NCBI Taxonomy" id="9606"/>
    <lineage>
        <taxon>Eukaryota</taxon>
        <taxon>Metazoa</taxon>
        <taxon>Chordata</taxon>
        <taxon>Craniata</taxon>
        <taxon>Vertebrata</taxon>
        <taxon>Euteleostomi</taxon>
        <taxon>Mammalia</taxon>
        <taxon>Eutheria</taxon>
        <taxon>Euarchontoglires</taxon>
        <taxon>Primates</taxon>
        <taxon>Haplorrhini</taxon>
        <taxon>Catarrhini</taxon>
        <taxon>Hominidae</taxon>
        <taxon>Homo</taxon>
    </lineage>
</organism>